<evidence type="ECO:0000250" key="1"/>
<evidence type="ECO:0000250" key="2">
    <source>
        <dbReference type="UniProtKB" id="Q14254"/>
    </source>
</evidence>
<evidence type="ECO:0000269" key="3">
    <source>
    </source>
</evidence>
<evidence type="ECO:0000303" key="4">
    <source>
    </source>
</evidence>
<evidence type="ECO:0000305" key="5"/>
<protein>
    <recommendedName>
        <fullName>Flotillin-2</fullName>
    </recommendedName>
    <alternativeName>
        <fullName>Reggie-1</fullName>
        <shortName>REG-1</shortName>
    </alternativeName>
</protein>
<gene>
    <name type="primary">Flot2</name>
    <name type="synonym">Reg1</name>
</gene>
<sequence length="428" mass="47038">MGNCHTVGPNEALVVSGGCCGSDYKQYVFGGWAWAWWCISDTQRISLEIMTLQPRCEDVETAEGVALTVTGVAQVKIMTEKELLAVACEQFLGKNVQDIKNVVLQTLEGHLRSILGTLTVEQIYQDRDQFAKLVREVAAPDVGRMGIEILSFTIKDVYDKVDYLSSLGKTQTAVVQRDADIGVAEAERDAGIREAECKKEMLDVKFMADTKIADSKRAFELQKSAFSEEVNIKTAEAQLAYELQGAREQQKIRQEEIEIEVVQRKKQIAVEAQEILRTDKELIATVRRPAEAEAHRIQQIAEGEKVKQVLLAQAEAEKIRKIGEAEAAVIEAMGKAEAERMKLKAEAYQKYGDAAKMALVLEALPQIAAKISAPLTKVDEIVVLSGDNSKVTSEVNRLLAELPASVHALTGVDLSKIPLIKNATGAQV</sequence>
<keyword id="KW-0025">Alternative splicing</keyword>
<keyword id="KW-0130">Cell adhesion</keyword>
<keyword id="KW-0967">Endosome</keyword>
<keyword id="KW-0449">Lipoprotein</keyword>
<keyword id="KW-0472">Membrane</keyword>
<keyword id="KW-0519">Myristate</keyword>
<keyword id="KW-0564">Palmitate</keyword>
<keyword id="KW-0597">Phosphoprotein</keyword>
<keyword id="KW-1185">Reference proteome</keyword>
<feature type="initiator methionine" description="Removed" evidence="2">
    <location>
        <position position="1"/>
    </location>
</feature>
<feature type="chain" id="PRO_0000094051" description="Flotillin-2">
    <location>
        <begin position="2"/>
        <end position="428"/>
    </location>
</feature>
<feature type="modified residue" description="Phosphoserine" evidence="2">
    <location>
        <position position="405"/>
    </location>
</feature>
<feature type="lipid moiety-binding region" description="N-myristoyl glycine" evidence="2">
    <location>
        <position position="2"/>
    </location>
</feature>
<feature type="lipid moiety-binding region" description="S-palmitoyl cysteine; by ZDHHC5" evidence="1">
    <location>
        <position position="4"/>
    </location>
</feature>
<feature type="lipid moiety-binding region" description="S-palmitoyl cysteine" evidence="1">
    <location>
        <position position="19"/>
    </location>
</feature>
<feature type="lipid moiety-binding region" description="S-palmitoyl cysteine; by ZDHHC5" evidence="1">
    <location>
        <position position="20"/>
    </location>
</feature>
<feature type="splice variant" id="VSP_000503" description="In isoform 4." evidence="4">
    <original>MGNCHTVGPNEALVVSGGC</original>
    <variation>MTILCRCENIETSEGVPLF</variation>
    <location>
        <begin position="1"/>
        <end position="19"/>
    </location>
</feature>
<feature type="splice variant" id="VSP_000504" description="In isoform 4." evidence="4">
    <location>
        <begin position="20"/>
        <end position="68"/>
    </location>
</feature>
<feature type="splice variant" id="VSP_000505" description="In isoform 2." evidence="4">
    <original>ISLEIMTLQPRCEDVETAEGVALT</original>
    <variation>LSLEVMTILCRCENIETSEGVPLF</variation>
    <location>
        <begin position="45"/>
        <end position="68"/>
    </location>
</feature>
<feature type="sequence conflict" description="In Ref. 2; AAD00120." evidence="5" ref="2">
    <original>Q</original>
    <variation>K</variation>
    <location>
        <position position="427"/>
    </location>
</feature>
<name>FLOT2_RAT</name>
<organism>
    <name type="scientific">Rattus norvegicus</name>
    <name type="common">Rat</name>
    <dbReference type="NCBI Taxonomy" id="10116"/>
    <lineage>
        <taxon>Eukaryota</taxon>
        <taxon>Metazoa</taxon>
        <taxon>Chordata</taxon>
        <taxon>Craniata</taxon>
        <taxon>Vertebrata</taxon>
        <taxon>Euteleostomi</taxon>
        <taxon>Mammalia</taxon>
        <taxon>Eutheria</taxon>
        <taxon>Euarchontoglires</taxon>
        <taxon>Glires</taxon>
        <taxon>Rodentia</taxon>
        <taxon>Myomorpha</taxon>
        <taxon>Muroidea</taxon>
        <taxon>Muridae</taxon>
        <taxon>Murinae</taxon>
        <taxon>Rattus</taxon>
    </lineage>
</organism>
<reference key="1">
    <citation type="journal article" date="1998" name="J. Neurobiol.">
        <title>Identification of reggie-1 and reggie-2 as plasmamembrane-associated proteins which cocluster with activated GPI-anchored cell adhesion molecules in non-caveolar micropatches in neurons.</title>
        <authorList>
            <person name="Lang D.M."/>
            <person name="Lommel S."/>
            <person name="Jung M."/>
            <person name="Ankerhold R."/>
            <person name="Petrausch B."/>
            <person name="Laessing U."/>
            <person name="Wiechers M.F."/>
            <person name="Plattner H."/>
            <person name="Stuermer C.A.O."/>
        </authorList>
    </citation>
    <scope>NUCLEOTIDE SEQUENCE [MRNA] (ISOFORMS 1; 2 AND 4)</scope>
    <scope>FUNCTION</scope>
    <scope>SUBCELLULAR LOCATION</scope>
    <scope>TISSUE SPECIFICITY</scope>
    <scope>DEVELOPMENTAL STAGE</scope>
    <scope>SUBUNIT</scope>
    <scope>INDUCTION</scope>
    <source>
        <strain>Sprague-Dawley</strain>
        <tissue>Brain</tissue>
        <tissue>Skin</tissue>
    </source>
</reference>
<reference key="2">
    <citation type="submission" date="1996-07" db="EMBL/GenBank/DDBJ databases">
        <authorList>
            <person name="Lommel S.M."/>
            <person name="Schulte T."/>
            <person name="Stuermer C.A.O."/>
        </authorList>
    </citation>
    <scope>NUCLEOTIDE SEQUENCE [MRNA]</scope>
    <source>
        <strain>Sprague-Dawley</strain>
        <tissue>Brain</tissue>
    </source>
</reference>
<dbReference type="EMBL" id="AF023302">
    <property type="protein sequence ID" value="AAC98727.1"/>
    <property type="molecule type" value="mRNA"/>
</dbReference>
<dbReference type="EMBL" id="AF023303">
    <property type="protein sequence ID" value="AAC98728.1"/>
    <property type="molecule type" value="mRNA"/>
</dbReference>
<dbReference type="EMBL" id="AF023304">
    <property type="protein sequence ID" value="AAC98729.1"/>
    <property type="molecule type" value="mRNA"/>
</dbReference>
<dbReference type="EMBL" id="U64999">
    <property type="protein sequence ID" value="AAD00120.1"/>
    <property type="molecule type" value="mRNA"/>
</dbReference>
<dbReference type="RefSeq" id="NP_001257729.1">
    <molecule id="Q9Z2S9-1"/>
    <property type="nucleotide sequence ID" value="NM_001270800.1"/>
</dbReference>
<dbReference type="RefSeq" id="NP_114018.1">
    <molecule id="Q9Z2S9-2"/>
    <property type="nucleotide sequence ID" value="NM_031830.2"/>
</dbReference>
<dbReference type="BMRB" id="Q9Z2S9"/>
<dbReference type="SMR" id="Q9Z2S9"/>
<dbReference type="BioGRID" id="249824">
    <property type="interactions" value="1"/>
</dbReference>
<dbReference type="CORUM" id="Q9Z2S9"/>
<dbReference type="FunCoup" id="Q9Z2S9">
    <property type="interactions" value="1365"/>
</dbReference>
<dbReference type="IntAct" id="Q9Z2S9">
    <property type="interactions" value="3"/>
</dbReference>
<dbReference type="MINT" id="Q9Z2S9"/>
<dbReference type="STRING" id="10116.ENSRNOP00000014104"/>
<dbReference type="TCDB" id="8.A.21.3.2">
    <property type="family name" value="the stomatin/podocin/band 7/nephrosis,2/spfh (stomatin) family"/>
</dbReference>
<dbReference type="iPTMnet" id="Q9Z2S9"/>
<dbReference type="PhosphoSitePlus" id="Q9Z2S9"/>
<dbReference type="SwissPalm" id="Q9Z2S9"/>
<dbReference type="jPOST" id="Q9Z2S9"/>
<dbReference type="PaxDb" id="10116-ENSRNOP00000014104"/>
<dbReference type="GeneID" id="83764"/>
<dbReference type="KEGG" id="rno:83764"/>
<dbReference type="AGR" id="RGD:70993"/>
<dbReference type="CTD" id="2319"/>
<dbReference type="RGD" id="70993">
    <property type="gene designation" value="Flot2"/>
</dbReference>
<dbReference type="VEuPathDB" id="HostDB:ENSRNOG00000009681"/>
<dbReference type="eggNOG" id="KOG2668">
    <property type="taxonomic scope" value="Eukaryota"/>
</dbReference>
<dbReference type="InParanoid" id="Q9Z2S9"/>
<dbReference type="OrthoDB" id="45506at9989"/>
<dbReference type="PhylomeDB" id="Q9Z2S9"/>
<dbReference type="Reactome" id="R-RNO-5213460">
    <property type="pathway name" value="RIPK1-mediated regulated necrosis"/>
</dbReference>
<dbReference type="Reactome" id="R-RNO-5675482">
    <property type="pathway name" value="Regulation of necroptotic cell death"/>
</dbReference>
<dbReference type="Reactome" id="R-RNO-8849932">
    <property type="pathway name" value="Synaptic adhesion-like molecules"/>
</dbReference>
<dbReference type="Reactome" id="R-RNO-8980692">
    <property type="pathway name" value="RHOA GTPase cycle"/>
</dbReference>
<dbReference type="Reactome" id="R-RNO-9013026">
    <property type="pathway name" value="RHOB GTPase cycle"/>
</dbReference>
<dbReference type="Reactome" id="R-RNO-9696264">
    <property type="pathway name" value="RND3 GTPase cycle"/>
</dbReference>
<dbReference type="Reactome" id="R-RNO-9696273">
    <property type="pathway name" value="RND1 GTPase cycle"/>
</dbReference>
<dbReference type="PRO" id="PR:Q9Z2S9"/>
<dbReference type="Proteomes" id="UP000002494">
    <property type="component" value="Chromosome 10"/>
</dbReference>
<dbReference type="Bgee" id="ENSRNOG00000009681">
    <property type="expression patterns" value="Expressed in skeletal muscle tissue and 19 other cell types or tissues"/>
</dbReference>
<dbReference type="ExpressionAtlas" id="Q9Z2S9">
    <property type="expression patterns" value="baseline and differential"/>
</dbReference>
<dbReference type="GO" id="GO:0002080">
    <property type="term" value="C:acrosomal membrane"/>
    <property type="evidence" value="ECO:0000266"/>
    <property type="project" value="RGD"/>
</dbReference>
<dbReference type="GO" id="GO:0005912">
    <property type="term" value="C:adherens junction"/>
    <property type="evidence" value="ECO:0000266"/>
    <property type="project" value="RGD"/>
</dbReference>
<dbReference type="GO" id="GO:0016323">
    <property type="term" value="C:basolateral plasma membrane"/>
    <property type="evidence" value="ECO:0000266"/>
    <property type="project" value="RGD"/>
</dbReference>
<dbReference type="GO" id="GO:0005901">
    <property type="term" value="C:caveola"/>
    <property type="evidence" value="ECO:0000314"/>
    <property type="project" value="RGD"/>
</dbReference>
<dbReference type="GO" id="GO:0044291">
    <property type="term" value="C:cell-cell contact zone"/>
    <property type="evidence" value="ECO:0000266"/>
    <property type="project" value="RGD"/>
</dbReference>
<dbReference type="GO" id="GO:0030864">
    <property type="term" value="C:cortical actin cytoskeleton"/>
    <property type="evidence" value="ECO:0000266"/>
    <property type="project" value="RGD"/>
</dbReference>
<dbReference type="GO" id="GO:0031410">
    <property type="term" value="C:cytoplasmic vesicle"/>
    <property type="evidence" value="ECO:0000266"/>
    <property type="project" value="RGD"/>
</dbReference>
<dbReference type="GO" id="GO:0032839">
    <property type="term" value="C:dendrite cytoplasm"/>
    <property type="evidence" value="ECO:0007669"/>
    <property type="project" value="GOC"/>
</dbReference>
<dbReference type="GO" id="GO:0030139">
    <property type="term" value="C:endocytic vesicle"/>
    <property type="evidence" value="ECO:0000250"/>
    <property type="project" value="UniProtKB"/>
</dbReference>
<dbReference type="GO" id="GO:0005768">
    <property type="term" value="C:endosome"/>
    <property type="evidence" value="ECO:0000250"/>
    <property type="project" value="UniProtKB"/>
</dbReference>
<dbReference type="GO" id="GO:0016600">
    <property type="term" value="C:flotillin complex"/>
    <property type="evidence" value="ECO:0000314"/>
    <property type="project" value="RGD"/>
</dbReference>
<dbReference type="GO" id="GO:0098978">
    <property type="term" value="C:glutamatergic synapse"/>
    <property type="evidence" value="ECO:0000314"/>
    <property type="project" value="SynGO"/>
</dbReference>
<dbReference type="GO" id="GO:0030027">
    <property type="term" value="C:lamellipodium"/>
    <property type="evidence" value="ECO:0000266"/>
    <property type="project" value="RGD"/>
</dbReference>
<dbReference type="GO" id="GO:0016020">
    <property type="term" value="C:membrane"/>
    <property type="evidence" value="ECO:0000266"/>
    <property type="project" value="RGD"/>
</dbReference>
<dbReference type="GO" id="GO:0045121">
    <property type="term" value="C:membrane raft"/>
    <property type="evidence" value="ECO:0000266"/>
    <property type="project" value="RGD"/>
</dbReference>
<dbReference type="GO" id="GO:0048471">
    <property type="term" value="C:perinuclear region of cytoplasm"/>
    <property type="evidence" value="ECO:0000266"/>
    <property type="project" value="RGD"/>
</dbReference>
<dbReference type="GO" id="GO:0005886">
    <property type="term" value="C:plasma membrane"/>
    <property type="evidence" value="ECO:0000318"/>
    <property type="project" value="GO_Central"/>
</dbReference>
<dbReference type="GO" id="GO:0048787">
    <property type="term" value="C:presynaptic active zone membrane"/>
    <property type="evidence" value="ECO:0000314"/>
    <property type="project" value="SynGO"/>
</dbReference>
<dbReference type="GO" id="GO:0045202">
    <property type="term" value="C:synapse"/>
    <property type="evidence" value="ECO:0000314"/>
    <property type="project" value="SynGO"/>
</dbReference>
<dbReference type="GO" id="GO:0001931">
    <property type="term" value="C:uropod"/>
    <property type="evidence" value="ECO:0000266"/>
    <property type="project" value="RGD"/>
</dbReference>
<dbReference type="GO" id="GO:0031982">
    <property type="term" value="C:vesicle"/>
    <property type="evidence" value="ECO:0000266"/>
    <property type="project" value="RGD"/>
</dbReference>
<dbReference type="GO" id="GO:0035255">
    <property type="term" value="F:ionotropic glutamate receptor binding"/>
    <property type="evidence" value="ECO:0000353"/>
    <property type="project" value="RGD"/>
</dbReference>
<dbReference type="GO" id="GO:0002020">
    <property type="term" value="F:protease binding"/>
    <property type="evidence" value="ECO:0000353"/>
    <property type="project" value="UniProtKB"/>
</dbReference>
<dbReference type="GO" id="GO:0098937">
    <property type="term" value="P:anterograde dendritic transport"/>
    <property type="evidence" value="ECO:0000266"/>
    <property type="project" value="RGD"/>
</dbReference>
<dbReference type="GO" id="GO:0007155">
    <property type="term" value="P:cell adhesion"/>
    <property type="evidence" value="ECO:0007669"/>
    <property type="project" value="UniProtKB-KW"/>
</dbReference>
<dbReference type="GO" id="GO:1902992">
    <property type="term" value="P:negative regulation of amyloid precursor protein catabolic process"/>
    <property type="evidence" value="ECO:0000266"/>
    <property type="project" value="RGD"/>
</dbReference>
<dbReference type="GO" id="GO:0010629">
    <property type="term" value="P:negative regulation of gene expression"/>
    <property type="evidence" value="ECO:0000266"/>
    <property type="project" value="RGD"/>
</dbReference>
<dbReference type="GO" id="GO:0043123">
    <property type="term" value="P:positive regulation of canonical NF-kappaB signal transduction"/>
    <property type="evidence" value="ECO:0000266"/>
    <property type="project" value="RGD"/>
</dbReference>
<dbReference type="GO" id="GO:1903905">
    <property type="term" value="P:positive regulation of establishment of T cell polarity"/>
    <property type="evidence" value="ECO:0000266"/>
    <property type="project" value="RGD"/>
</dbReference>
<dbReference type="GO" id="GO:0072659">
    <property type="term" value="P:protein localization to plasma membrane"/>
    <property type="evidence" value="ECO:0000266"/>
    <property type="project" value="RGD"/>
</dbReference>
<dbReference type="GO" id="GO:0044860">
    <property type="term" value="P:protein localization to plasma membrane raft"/>
    <property type="evidence" value="ECO:0000266"/>
    <property type="project" value="RGD"/>
</dbReference>
<dbReference type="GO" id="GO:0050821">
    <property type="term" value="P:protein stabilization"/>
    <property type="evidence" value="ECO:0000266"/>
    <property type="project" value="RGD"/>
</dbReference>
<dbReference type="GO" id="GO:0045661">
    <property type="term" value="P:regulation of myoblast differentiation"/>
    <property type="evidence" value="ECO:0000266"/>
    <property type="project" value="RGD"/>
</dbReference>
<dbReference type="GO" id="GO:0099072">
    <property type="term" value="P:regulation of postsynaptic membrane neurotransmitter receptor levels"/>
    <property type="evidence" value="ECO:0000266"/>
    <property type="project" value="RGD"/>
</dbReference>
<dbReference type="CDD" id="cd03399">
    <property type="entry name" value="SPFH_flotillin"/>
    <property type="match status" value="1"/>
</dbReference>
<dbReference type="FunFam" id="3.30.479.30:FF:000003">
    <property type="entry name" value="Flotillin 2"/>
    <property type="match status" value="1"/>
</dbReference>
<dbReference type="Gene3D" id="3.30.479.30">
    <property type="entry name" value="Band 7 domain"/>
    <property type="match status" value="1"/>
</dbReference>
<dbReference type="InterPro" id="IPR001107">
    <property type="entry name" value="Band_7"/>
</dbReference>
<dbReference type="InterPro" id="IPR036013">
    <property type="entry name" value="Band_7/SPFH_dom_sf"/>
</dbReference>
<dbReference type="InterPro" id="IPR031905">
    <property type="entry name" value="Flotillin_C"/>
</dbReference>
<dbReference type="InterPro" id="IPR027705">
    <property type="entry name" value="Flotillin_fam"/>
</dbReference>
<dbReference type="PANTHER" id="PTHR13806:SF46">
    <property type="entry name" value="FLOTILLIN-1-RELATED"/>
    <property type="match status" value="1"/>
</dbReference>
<dbReference type="PANTHER" id="PTHR13806">
    <property type="entry name" value="FLOTILLIN-RELATED"/>
    <property type="match status" value="1"/>
</dbReference>
<dbReference type="Pfam" id="PF01145">
    <property type="entry name" value="Band_7"/>
    <property type="match status" value="1"/>
</dbReference>
<dbReference type="Pfam" id="PF15975">
    <property type="entry name" value="Flot"/>
    <property type="match status" value="1"/>
</dbReference>
<dbReference type="SMART" id="SM00244">
    <property type="entry name" value="PHB"/>
    <property type="match status" value="1"/>
</dbReference>
<dbReference type="SUPFAM" id="SSF117892">
    <property type="entry name" value="Band 7/SPFH domain"/>
    <property type="match status" value="1"/>
</dbReference>
<accession>Q9Z2S9</accession>
<accession>Q9QX33</accession>
<accession>Q9Z2S8</accession>
<proteinExistence type="evidence at protein level"/>
<comment type="function">
    <text evidence="3">May play a role in axon growth and regeneration. May be involved in epidermal cell adhesion and epidermal structure and function.</text>
</comment>
<comment type="subunit">
    <text evidence="1">Heterooligomeric complex of flotillin-1 and flotillin-2 and caveolin-1 and caveolin-2. Interacts with ECPAS (By similarity).</text>
</comment>
<comment type="subcellular location">
    <subcellularLocation>
        <location evidence="3">Membrane</location>
    </subcellularLocation>
    <subcellularLocation>
        <location evidence="1">Endosome</location>
    </subcellularLocation>
    <subcellularLocation>
        <location evidence="2">Membrane</location>
        <topology evidence="2">Lipid-anchor</topology>
    </subcellularLocation>
    <text>In neuronal cells, associated with GPI-anchored cell-adhesion molecules.</text>
</comment>
<comment type="alternative products">
    <event type="alternative splicing"/>
    <isoform>
        <id>Q9Z2S9-1</id>
        <name>1</name>
        <sequence type="displayed"/>
    </isoform>
    <isoform>
        <id>Q9Z2S9-2</id>
        <name>2</name>
        <sequence type="described" ref="VSP_000505"/>
    </isoform>
    <isoform>
        <id>Q9Z2S9-3</id>
        <name>4</name>
        <sequence type="described" ref="VSP_000503 VSP_000504"/>
    </isoform>
</comment>
<comment type="tissue specificity">
    <text evidence="3">Brain, retina and skin.</text>
</comment>
<comment type="developmental stage">
    <text evidence="3">Expressed during embryogenesis, postnatal stages and in adult.</text>
</comment>
<comment type="induction">
    <text evidence="3">By optic nerve injury.</text>
</comment>
<comment type="PTM">
    <text evidence="1">ZDHHC5-catalyzed palmitoylation may be required for the formation of higher-order complexes and for neurite outgrowth in cultured neural stem cells.</text>
</comment>
<comment type="similarity">
    <text evidence="5">Belongs to the band 7/mec-2 family. Flotillin subfamily.</text>
</comment>